<keyword id="KW-1185">Reference proteome</keyword>
<keyword id="KW-0804">Transcription</keyword>
<keyword id="KW-0805">Transcription regulation</keyword>
<name>P13_BPPM2</name>
<sequence length="64" mass="7161">MNRDIYTQIETVGVLEKRVEKAGTFELKAAAMALAKAQRKLSVLLAKGMAELEDRLKIAELRTK</sequence>
<proteinExistence type="predicted"/>
<organism>
    <name type="scientific">Pseudoalteromonas phage PM2</name>
    <name type="common">Bacteriophage PM2</name>
    <dbReference type="NCBI Taxonomy" id="2905728"/>
    <lineage>
        <taxon>Viruses</taxon>
        <taxon>Varidnaviria</taxon>
        <taxon>Bamfordvirae</taxon>
        <taxon>Preplasmiviricota</taxon>
        <taxon>Tectiliviricetes</taxon>
        <taxon>Vinavirales</taxon>
        <taxon>Corticoviridae</taxon>
        <taxon>Corticovirus</taxon>
        <taxon>Corticovirus PM2</taxon>
    </lineage>
</organism>
<feature type="chain" id="PRO_0000339908" description="Transcription factor P13">
    <location>
        <begin position="1"/>
        <end position="64"/>
    </location>
</feature>
<reference key="1">
    <citation type="journal article" date="1999" name="Virology">
        <title>The complete genome sequence of PM2, the first lipid-containing bacterial virus to be isolated.</title>
        <authorList>
            <person name="Maennistoe R.H."/>
            <person name="Kivelae H.M."/>
            <person name="Paulin L."/>
            <person name="Bamford D.H."/>
            <person name="Bamford J.K."/>
        </authorList>
    </citation>
    <scope>NUCLEOTIDE SEQUENCE [GENOMIC DNA]</scope>
</reference>
<accession>Q9XJS2</accession>
<evidence type="ECO:0000305" key="1"/>
<dbReference type="EMBL" id="AF155037">
    <property type="protein sequence ID" value="AAD43544.1"/>
    <property type="molecule type" value="Genomic_DNA"/>
</dbReference>
<dbReference type="RefSeq" id="NP_049897.1">
    <property type="nucleotide sequence ID" value="NC_000867.1"/>
</dbReference>
<dbReference type="SMR" id="Q9XJS2"/>
<dbReference type="KEGG" id="vg:1262038"/>
<dbReference type="Proteomes" id="UP000002136">
    <property type="component" value="Genome"/>
</dbReference>
<organismHost>
    <name type="scientific">Pseudoalteromonas espejiana</name>
    <dbReference type="NCBI Taxonomy" id="28107"/>
</organismHost>
<protein>
    <recommendedName>
        <fullName>Transcription factor P13</fullName>
    </recommendedName>
    <alternativeName>
        <fullName>Protein XIII</fullName>
    </alternativeName>
</protein>
<comment type="function">
    <text evidence="1">Transcription factor that regulates expression of phage structural components with protein P14.</text>
</comment>
<gene>
    <name type="ORF">XIII</name>
</gene>